<name>AROB_SYNY3</name>
<organism>
    <name type="scientific">Synechocystis sp. (strain ATCC 27184 / PCC 6803 / Kazusa)</name>
    <dbReference type="NCBI Taxonomy" id="1111708"/>
    <lineage>
        <taxon>Bacteria</taxon>
        <taxon>Bacillati</taxon>
        <taxon>Cyanobacteriota</taxon>
        <taxon>Cyanophyceae</taxon>
        <taxon>Synechococcales</taxon>
        <taxon>Merismopediaceae</taxon>
        <taxon>Synechocystis</taxon>
    </lineage>
</organism>
<proteinExistence type="inferred from homology"/>
<comment type="function">
    <text evidence="1">Catalyzes the conversion of 3-deoxy-D-arabino-heptulosonate 7-phosphate (DAHP) to dehydroquinate (DHQ).</text>
</comment>
<comment type="catalytic activity">
    <reaction evidence="1">
        <text>7-phospho-2-dehydro-3-deoxy-D-arabino-heptonate = 3-dehydroquinate + phosphate</text>
        <dbReference type="Rhea" id="RHEA:21968"/>
        <dbReference type="ChEBI" id="CHEBI:32364"/>
        <dbReference type="ChEBI" id="CHEBI:43474"/>
        <dbReference type="ChEBI" id="CHEBI:58394"/>
        <dbReference type="EC" id="4.2.3.4"/>
    </reaction>
</comment>
<comment type="cofactor">
    <cofactor evidence="1">
        <name>NAD(+)</name>
        <dbReference type="ChEBI" id="CHEBI:57540"/>
    </cofactor>
</comment>
<comment type="cofactor">
    <cofactor evidence="1">
        <name>Co(2+)</name>
        <dbReference type="ChEBI" id="CHEBI:48828"/>
    </cofactor>
    <cofactor evidence="1">
        <name>Zn(2+)</name>
        <dbReference type="ChEBI" id="CHEBI:29105"/>
    </cofactor>
    <text evidence="1">Binds 1 divalent metal cation per subunit. Can use either Co(2+) or Zn(2+).</text>
</comment>
<comment type="pathway">
    <text evidence="1">Metabolic intermediate biosynthesis; chorismate biosynthesis; chorismate from D-erythrose 4-phosphate and phosphoenolpyruvate: step 2/7.</text>
</comment>
<comment type="subcellular location">
    <subcellularLocation>
        <location evidence="1">Cytoplasm</location>
    </subcellularLocation>
</comment>
<comment type="similarity">
    <text evidence="1 2">Belongs to the sugar phosphate cyclases superfamily. Dehydroquinate synthase family.</text>
</comment>
<gene>
    <name evidence="1" type="primary">aroB</name>
    <name type="ordered locus">slr2130</name>
</gene>
<evidence type="ECO:0000255" key="1">
    <source>
        <dbReference type="HAMAP-Rule" id="MF_00110"/>
    </source>
</evidence>
<evidence type="ECO:0000305" key="2"/>
<feature type="chain" id="PRO_0000140800" description="3-dehydroquinate synthase">
    <location>
        <begin position="1"/>
        <end position="361"/>
    </location>
</feature>
<feature type="binding site" evidence="1">
    <location>
        <begin position="107"/>
        <end position="111"/>
    </location>
    <ligand>
        <name>NAD(+)</name>
        <dbReference type="ChEBI" id="CHEBI:57540"/>
    </ligand>
</feature>
<feature type="binding site" evidence="1">
    <location>
        <begin position="131"/>
        <end position="132"/>
    </location>
    <ligand>
        <name>NAD(+)</name>
        <dbReference type="ChEBI" id="CHEBI:57540"/>
    </ligand>
</feature>
<feature type="binding site" evidence="1">
    <location>
        <position position="144"/>
    </location>
    <ligand>
        <name>NAD(+)</name>
        <dbReference type="ChEBI" id="CHEBI:57540"/>
    </ligand>
</feature>
<feature type="binding site" evidence="1">
    <location>
        <position position="153"/>
    </location>
    <ligand>
        <name>NAD(+)</name>
        <dbReference type="ChEBI" id="CHEBI:57540"/>
    </ligand>
</feature>
<feature type="binding site" evidence="1">
    <location>
        <position position="186"/>
    </location>
    <ligand>
        <name>Zn(2+)</name>
        <dbReference type="ChEBI" id="CHEBI:29105"/>
    </ligand>
</feature>
<feature type="binding site" evidence="1">
    <location>
        <position position="251"/>
    </location>
    <ligand>
        <name>Zn(2+)</name>
        <dbReference type="ChEBI" id="CHEBI:29105"/>
    </ligand>
</feature>
<feature type="binding site" evidence="1">
    <location>
        <position position="268"/>
    </location>
    <ligand>
        <name>Zn(2+)</name>
        <dbReference type="ChEBI" id="CHEBI:29105"/>
    </ligand>
</feature>
<protein>
    <recommendedName>
        <fullName evidence="1">3-dehydroquinate synthase</fullName>
        <shortName evidence="1">DHQS</shortName>
        <ecNumber evidence="1">4.2.3.4</ecNumber>
    </recommendedName>
</protein>
<dbReference type="EC" id="4.2.3.4" evidence="1"/>
<dbReference type="EMBL" id="BA000022">
    <property type="protein sequence ID" value="BAA18068.1"/>
    <property type="molecule type" value="Genomic_DNA"/>
</dbReference>
<dbReference type="PIR" id="S75507">
    <property type="entry name" value="S75507"/>
</dbReference>
<dbReference type="SMR" id="P73997"/>
<dbReference type="FunCoup" id="P73997">
    <property type="interactions" value="436"/>
</dbReference>
<dbReference type="IntAct" id="P73997">
    <property type="interactions" value="5"/>
</dbReference>
<dbReference type="STRING" id="1148.gene:10498939"/>
<dbReference type="PaxDb" id="1148-1653152"/>
<dbReference type="EnsemblBacteria" id="BAA18068">
    <property type="protein sequence ID" value="BAA18068"/>
    <property type="gene ID" value="BAA18068"/>
</dbReference>
<dbReference type="KEGG" id="syn:slr2130"/>
<dbReference type="eggNOG" id="COG0337">
    <property type="taxonomic scope" value="Bacteria"/>
</dbReference>
<dbReference type="InParanoid" id="P73997"/>
<dbReference type="PhylomeDB" id="P73997"/>
<dbReference type="UniPathway" id="UPA00053">
    <property type="reaction ID" value="UER00085"/>
</dbReference>
<dbReference type="Proteomes" id="UP000001425">
    <property type="component" value="Chromosome"/>
</dbReference>
<dbReference type="GO" id="GO:0005737">
    <property type="term" value="C:cytoplasm"/>
    <property type="evidence" value="ECO:0007669"/>
    <property type="project" value="UniProtKB-SubCell"/>
</dbReference>
<dbReference type="GO" id="GO:0003856">
    <property type="term" value="F:3-dehydroquinate synthase activity"/>
    <property type="evidence" value="ECO:0000318"/>
    <property type="project" value="GO_Central"/>
</dbReference>
<dbReference type="GO" id="GO:0046872">
    <property type="term" value="F:metal ion binding"/>
    <property type="evidence" value="ECO:0007669"/>
    <property type="project" value="UniProtKB-KW"/>
</dbReference>
<dbReference type="GO" id="GO:0000166">
    <property type="term" value="F:nucleotide binding"/>
    <property type="evidence" value="ECO:0007669"/>
    <property type="project" value="UniProtKB-KW"/>
</dbReference>
<dbReference type="GO" id="GO:0008652">
    <property type="term" value="P:amino acid biosynthetic process"/>
    <property type="evidence" value="ECO:0007669"/>
    <property type="project" value="UniProtKB-KW"/>
</dbReference>
<dbReference type="GO" id="GO:0009073">
    <property type="term" value="P:aromatic amino acid family biosynthetic process"/>
    <property type="evidence" value="ECO:0000318"/>
    <property type="project" value="GO_Central"/>
</dbReference>
<dbReference type="GO" id="GO:0009423">
    <property type="term" value="P:chorismate biosynthetic process"/>
    <property type="evidence" value="ECO:0007669"/>
    <property type="project" value="UniProtKB-UniRule"/>
</dbReference>
<dbReference type="CDD" id="cd08195">
    <property type="entry name" value="DHQS"/>
    <property type="match status" value="1"/>
</dbReference>
<dbReference type="FunFam" id="1.20.1090.10:FF:000040">
    <property type="entry name" value="3-dehydroquinate synthase"/>
    <property type="match status" value="1"/>
</dbReference>
<dbReference type="FunFam" id="3.40.50.1970:FF:000007">
    <property type="entry name" value="Pentafunctional AROM polypeptide"/>
    <property type="match status" value="1"/>
</dbReference>
<dbReference type="Gene3D" id="3.40.50.1970">
    <property type="match status" value="1"/>
</dbReference>
<dbReference type="Gene3D" id="1.20.1090.10">
    <property type="entry name" value="Dehydroquinate synthase-like - alpha domain"/>
    <property type="match status" value="1"/>
</dbReference>
<dbReference type="HAMAP" id="MF_00110">
    <property type="entry name" value="DHQ_synthase"/>
    <property type="match status" value="1"/>
</dbReference>
<dbReference type="InterPro" id="IPR050071">
    <property type="entry name" value="Dehydroquinate_synthase"/>
</dbReference>
<dbReference type="InterPro" id="IPR016037">
    <property type="entry name" value="DHQ_synth_AroB"/>
</dbReference>
<dbReference type="InterPro" id="IPR030963">
    <property type="entry name" value="DHQ_synth_fam"/>
</dbReference>
<dbReference type="InterPro" id="IPR030960">
    <property type="entry name" value="DHQS/DOIS_N"/>
</dbReference>
<dbReference type="InterPro" id="IPR056179">
    <property type="entry name" value="DHQS_C"/>
</dbReference>
<dbReference type="NCBIfam" id="TIGR01357">
    <property type="entry name" value="aroB"/>
    <property type="match status" value="1"/>
</dbReference>
<dbReference type="PANTHER" id="PTHR43622">
    <property type="entry name" value="3-DEHYDROQUINATE SYNTHASE"/>
    <property type="match status" value="1"/>
</dbReference>
<dbReference type="PANTHER" id="PTHR43622:SF7">
    <property type="entry name" value="3-DEHYDROQUINATE SYNTHASE, CHLOROPLASTIC"/>
    <property type="match status" value="1"/>
</dbReference>
<dbReference type="Pfam" id="PF01761">
    <property type="entry name" value="DHQ_synthase"/>
    <property type="match status" value="1"/>
</dbReference>
<dbReference type="Pfam" id="PF24621">
    <property type="entry name" value="DHQS_C"/>
    <property type="match status" value="1"/>
</dbReference>
<dbReference type="PIRSF" id="PIRSF001455">
    <property type="entry name" value="DHQ_synth"/>
    <property type="match status" value="1"/>
</dbReference>
<dbReference type="SUPFAM" id="SSF56796">
    <property type="entry name" value="Dehydroquinate synthase-like"/>
    <property type="match status" value="1"/>
</dbReference>
<sequence length="361" mass="38855">MATTIPVPLPQSPYQVQIVPGGLAAIADHLAPLGLGKKIMVVSNPEIYDYYGEVVIQALQRAGYEVFQHLIPAGETHKTLASINELYDVAFQANLERNSTLLSLGGGVIGDMTGFGAATWLRGINFVQVPTSLLAMVDASIGGKTGVNHPQGKNLIGAFYQPRLVYIDPVVLKTLPEREFRAGMAEVIKYGVIWDSELFTALEEAEDLSSIDRLPDELLTKIIQRSCQAKVDVVSQDEKEAGLRAILNYGHTVGHGVESLTGYGVINHGEAVAIGMEAAAKIAHYLGLCDQSLGDRQRQLLLKTKLPTEMPPTLAVENLLASLLHDKKVKAGKVRFILPTAIGQVTISDAVTDEVIKATLG</sequence>
<accession>P73997</accession>
<reference key="1">
    <citation type="journal article" date="1996" name="DNA Res.">
        <title>Sequence analysis of the genome of the unicellular cyanobacterium Synechocystis sp. strain PCC6803. II. Sequence determination of the entire genome and assignment of potential protein-coding regions.</title>
        <authorList>
            <person name="Kaneko T."/>
            <person name="Sato S."/>
            <person name="Kotani H."/>
            <person name="Tanaka A."/>
            <person name="Asamizu E."/>
            <person name="Nakamura Y."/>
            <person name="Miyajima N."/>
            <person name="Hirosawa M."/>
            <person name="Sugiura M."/>
            <person name="Sasamoto S."/>
            <person name="Kimura T."/>
            <person name="Hosouchi T."/>
            <person name="Matsuno A."/>
            <person name="Muraki A."/>
            <person name="Nakazaki N."/>
            <person name="Naruo K."/>
            <person name="Okumura S."/>
            <person name="Shimpo S."/>
            <person name="Takeuchi C."/>
            <person name="Wada T."/>
            <person name="Watanabe A."/>
            <person name="Yamada M."/>
            <person name="Yasuda M."/>
            <person name="Tabata S."/>
        </authorList>
    </citation>
    <scope>NUCLEOTIDE SEQUENCE [LARGE SCALE GENOMIC DNA]</scope>
    <source>
        <strain>ATCC 27184 / PCC 6803 / Kazusa</strain>
    </source>
</reference>
<keyword id="KW-0028">Amino-acid biosynthesis</keyword>
<keyword id="KW-0057">Aromatic amino acid biosynthesis</keyword>
<keyword id="KW-0170">Cobalt</keyword>
<keyword id="KW-0963">Cytoplasm</keyword>
<keyword id="KW-0456">Lyase</keyword>
<keyword id="KW-0479">Metal-binding</keyword>
<keyword id="KW-0520">NAD</keyword>
<keyword id="KW-0547">Nucleotide-binding</keyword>
<keyword id="KW-1185">Reference proteome</keyword>
<keyword id="KW-0862">Zinc</keyword>